<proteinExistence type="evidence at protein level"/>
<name>IDN2_ARATH</name>
<comment type="function">
    <text evidence="3 4 5 6 7 8 9 10">Forms a complex with FDM1/IDNL1 and FDM2/IDNL2 that is required for RNA-directed DNA methylation (RdDM) and that functions at a downstream step of the RdDM pathway (PubMed:22570638, PubMed:22592791) and downstream of small interfering RNA (siRNA) formation (PubMed:22810086). Required for de novo DNA methylation, siRNA accumulation and siRNA-mediated maintenance methylation (PubMed:19915591). Required for several post-transcriptional gene silencing pathways (PubMed:20059743). Binds double-stranded RNAs (dsRNAs) with 5'-overhangs through its XS domain (PubMed:19915591, PubMed:20059743). Binds long non-coding RNA (lncRNA) in an AGO4-dependent manner and associates with DRM2, resulting in DNA methylation of RdDM target loci (PubMed:23246435, PubMed:24862207). Mediates the silencing of a subset of MORC6 target loci (PubMed:27171427).</text>
</comment>
<comment type="subunit">
    <text evidence="5 6 8 10">Interacts with FMD1/IDNL1 (PubMed:22592791). Forms a complex with FMD1/IDNL1 and FMD2/INDL2 (PubMed:22570638, PubMed:22592791). Can form homodimers (PubMed:22570638, PubMed:23246435). Interacts with MORC6 (PubMed:27171427).</text>
</comment>
<comment type="disruption phenotype">
    <text evidence="3 4 5 6 7">Late flowering phenotype (PubMed:22592791) and reduction of DNA methylation at RNA-directed DNA methylation (RdDM) target loci (PubMed:19915591, PubMed:20059743, PubMed:22570638, PubMed:22592791, PubMed:22810086).</text>
</comment>
<comment type="sequence caution">
    <conflict type="erroneous gene model prediction">
        <sequence resource="EMBL-CDS" id="CAB62356"/>
    </conflict>
</comment>
<sequence>MGSTVILSSDDEDSDISESEMDEYGDKMYLNLKGGKLKVRLSPQAFICPYCPNKKKTSFQYKDLLQHASGVGNSNSDKRSAKEKASHLALVKYLQQDLADSASEAEPSSKRQKNGNPIQDCDHDEKLVYPWKGIVVNIPTTKAQDGRSAGESGSKLRDEYILRGFNPTRVRPLWNYLGHSGTAIVEFNKDWNGLHNGLLFDKAYTVDGHGKKDWLKKDGPKLGLYGWIARADDYNGNNIIGENLRKTGDLKTIAELTEEEARKQELLVQNLRQLVEEKKKDMKEIEELCSVKSEELNQLMEEKEKNQQKHYRELNAIQERTMSHIQKIVDDHEKLKRLLESERKKLEIKCNELAKREVHNGTERMKLSEDLEQNASKNSSLELAAMEQQKADEEVKKLAEDQRRQKEELHEKIIRLERQRDQKQAIELEVEQLKGQLNVMKHMASDGDAEVVKEVDIIFKDLGEKEAQLADLDKFNQTLILRERRTNDELQEAHKELVNIMKEWNTNIGVKRMGELVTKPFVDAMQQKYCQQDVEDRAVEVLQLWEHYLKDSDWHPFKRVKLENEDREVEVIDDRDEKLRELKADLGDGPYNAVTKALLEINEYNPSGRYITTELWNFKADKKATLEEGVTCLLDQWEKAKRKRGMA</sequence>
<reference key="1">
    <citation type="journal article" date="2000" name="Nature">
        <title>Sequence and analysis of chromosome 3 of the plant Arabidopsis thaliana.</title>
        <authorList>
            <person name="Salanoubat M."/>
            <person name="Lemcke K."/>
            <person name="Rieger M."/>
            <person name="Ansorge W."/>
            <person name="Unseld M."/>
            <person name="Fartmann B."/>
            <person name="Valle G."/>
            <person name="Bloecker H."/>
            <person name="Perez-Alonso M."/>
            <person name="Obermaier B."/>
            <person name="Delseny M."/>
            <person name="Boutry M."/>
            <person name="Grivell L.A."/>
            <person name="Mache R."/>
            <person name="Puigdomenech P."/>
            <person name="De Simone V."/>
            <person name="Choisne N."/>
            <person name="Artiguenave F."/>
            <person name="Robert C."/>
            <person name="Brottier P."/>
            <person name="Wincker P."/>
            <person name="Cattolico L."/>
            <person name="Weissenbach J."/>
            <person name="Saurin W."/>
            <person name="Quetier F."/>
            <person name="Schaefer M."/>
            <person name="Mueller-Auer S."/>
            <person name="Gabel C."/>
            <person name="Fuchs M."/>
            <person name="Benes V."/>
            <person name="Wurmbach E."/>
            <person name="Drzonek H."/>
            <person name="Erfle H."/>
            <person name="Jordan N."/>
            <person name="Bangert S."/>
            <person name="Wiedelmann R."/>
            <person name="Kranz H."/>
            <person name="Voss H."/>
            <person name="Holland R."/>
            <person name="Brandt P."/>
            <person name="Nyakatura G."/>
            <person name="Vezzi A."/>
            <person name="D'Angelo M."/>
            <person name="Pallavicini A."/>
            <person name="Toppo S."/>
            <person name="Simionati B."/>
            <person name="Conrad A."/>
            <person name="Hornischer K."/>
            <person name="Kauer G."/>
            <person name="Loehnert T.-H."/>
            <person name="Nordsiek G."/>
            <person name="Reichelt J."/>
            <person name="Scharfe M."/>
            <person name="Schoen O."/>
            <person name="Bargues M."/>
            <person name="Terol J."/>
            <person name="Climent J."/>
            <person name="Navarro P."/>
            <person name="Collado C."/>
            <person name="Perez-Perez A."/>
            <person name="Ottenwaelder B."/>
            <person name="Duchemin D."/>
            <person name="Cooke R."/>
            <person name="Laudie M."/>
            <person name="Berger-Llauro C."/>
            <person name="Purnelle B."/>
            <person name="Masuy D."/>
            <person name="de Haan M."/>
            <person name="Maarse A.C."/>
            <person name="Alcaraz J.-P."/>
            <person name="Cottet A."/>
            <person name="Casacuberta E."/>
            <person name="Monfort A."/>
            <person name="Argiriou A."/>
            <person name="Flores M."/>
            <person name="Liguori R."/>
            <person name="Vitale D."/>
            <person name="Mannhaupt G."/>
            <person name="Haase D."/>
            <person name="Schoof H."/>
            <person name="Rudd S."/>
            <person name="Zaccaria P."/>
            <person name="Mewes H.-W."/>
            <person name="Mayer K.F.X."/>
            <person name="Kaul S."/>
            <person name="Town C.D."/>
            <person name="Koo H.L."/>
            <person name="Tallon L.J."/>
            <person name="Jenkins J."/>
            <person name="Rooney T."/>
            <person name="Rizzo M."/>
            <person name="Walts A."/>
            <person name="Utterback T."/>
            <person name="Fujii C.Y."/>
            <person name="Shea T.P."/>
            <person name="Creasy T.H."/>
            <person name="Haas B."/>
            <person name="Maiti R."/>
            <person name="Wu D."/>
            <person name="Peterson J."/>
            <person name="Van Aken S."/>
            <person name="Pai G."/>
            <person name="Militscher J."/>
            <person name="Sellers P."/>
            <person name="Gill J.E."/>
            <person name="Feldblyum T.V."/>
            <person name="Preuss D."/>
            <person name="Lin X."/>
            <person name="Nierman W.C."/>
            <person name="Salzberg S.L."/>
            <person name="White O."/>
            <person name="Venter J.C."/>
            <person name="Fraser C.M."/>
            <person name="Kaneko T."/>
            <person name="Nakamura Y."/>
            <person name="Sato S."/>
            <person name="Kato T."/>
            <person name="Asamizu E."/>
            <person name="Sasamoto S."/>
            <person name="Kimura T."/>
            <person name="Idesawa K."/>
            <person name="Kawashima K."/>
            <person name="Kishida Y."/>
            <person name="Kiyokawa C."/>
            <person name="Kohara M."/>
            <person name="Matsumoto M."/>
            <person name="Matsuno A."/>
            <person name="Muraki A."/>
            <person name="Nakayama S."/>
            <person name="Nakazaki N."/>
            <person name="Shinpo S."/>
            <person name="Takeuchi C."/>
            <person name="Wada T."/>
            <person name="Watanabe A."/>
            <person name="Yamada M."/>
            <person name="Yasuda M."/>
            <person name="Tabata S."/>
        </authorList>
    </citation>
    <scope>NUCLEOTIDE SEQUENCE [LARGE SCALE GENOMIC DNA]</scope>
    <source>
        <strain>cv. Columbia</strain>
    </source>
</reference>
<reference key="2">
    <citation type="journal article" date="2017" name="Plant J.">
        <title>Araport11: a complete reannotation of the Arabidopsis thaliana reference genome.</title>
        <authorList>
            <person name="Cheng C.Y."/>
            <person name="Krishnakumar V."/>
            <person name="Chan A.P."/>
            <person name="Thibaud-Nissen F."/>
            <person name="Schobel S."/>
            <person name="Town C.D."/>
        </authorList>
    </citation>
    <scope>GENOME REANNOTATION</scope>
    <source>
        <strain>cv. Columbia</strain>
    </source>
</reference>
<reference key="3">
    <citation type="journal article" date="2003" name="Science">
        <title>Empirical analysis of transcriptional activity in the Arabidopsis genome.</title>
        <authorList>
            <person name="Yamada K."/>
            <person name="Lim J."/>
            <person name="Dale J.M."/>
            <person name="Chen H."/>
            <person name="Shinn P."/>
            <person name="Palm C.J."/>
            <person name="Southwick A.M."/>
            <person name="Wu H.C."/>
            <person name="Kim C.J."/>
            <person name="Nguyen M."/>
            <person name="Pham P.K."/>
            <person name="Cheuk R.F."/>
            <person name="Karlin-Newmann G."/>
            <person name="Liu S.X."/>
            <person name="Lam B."/>
            <person name="Sakano H."/>
            <person name="Wu T."/>
            <person name="Yu G."/>
            <person name="Miranda M."/>
            <person name="Quach H.L."/>
            <person name="Tripp M."/>
            <person name="Chang C.H."/>
            <person name="Lee J.M."/>
            <person name="Toriumi M.J."/>
            <person name="Chan M.M."/>
            <person name="Tang C.C."/>
            <person name="Onodera C.S."/>
            <person name="Deng J.M."/>
            <person name="Akiyama K."/>
            <person name="Ansari Y."/>
            <person name="Arakawa T."/>
            <person name="Banh J."/>
            <person name="Banno F."/>
            <person name="Bowser L."/>
            <person name="Brooks S.Y."/>
            <person name="Carninci P."/>
            <person name="Chao Q."/>
            <person name="Choy N."/>
            <person name="Enju A."/>
            <person name="Goldsmith A.D."/>
            <person name="Gurjal M."/>
            <person name="Hansen N.F."/>
            <person name="Hayashizaki Y."/>
            <person name="Johnson-Hopson C."/>
            <person name="Hsuan V.W."/>
            <person name="Iida K."/>
            <person name="Karnes M."/>
            <person name="Khan S."/>
            <person name="Koesema E."/>
            <person name="Ishida J."/>
            <person name="Jiang P.X."/>
            <person name="Jones T."/>
            <person name="Kawai J."/>
            <person name="Kamiya A."/>
            <person name="Meyers C."/>
            <person name="Nakajima M."/>
            <person name="Narusaka M."/>
            <person name="Seki M."/>
            <person name="Sakurai T."/>
            <person name="Satou M."/>
            <person name="Tamse R."/>
            <person name="Vaysberg M."/>
            <person name="Wallender E.K."/>
            <person name="Wong C."/>
            <person name="Yamamura Y."/>
            <person name="Yuan S."/>
            <person name="Shinozaki K."/>
            <person name="Davis R.W."/>
            <person name="Theologis A."/>
            <person name="Ecker J.R."/>
        </authorList>
    </citation>
    <scope>NUCLEOTIDE SEQUENCE [LARGE SCALE MRNA]</scope>
    <source>
        <strain>cv. Columbia</strain>
    </source>
</reference>
<reference key="4">
    <citation type="journal article" date="2009" name="Nat. Struct. Mol. Biol.">
        <title>IDN1 and IDN2 are required for de novo DNA methylation in Arabidopsis thaliana.</title>
        <authorList>
            <person name="Ausin I."/>
            <person name="Mockler T.C."/>
            <person name="Chory J."/>
            <person name="Jacobsen S.E."/>
        </authorList>
    </citation>
    <scope>FUNCTION</scope>
    <scope>DISRUPTION PHENOTYPE</scope>
    <scope>MUTAGENESIS OF ASN-116 AND PHE-165</scope>
</reference>
<reference key="5">
    <citation type="journal article" date="2010" name="Plant J.">
        <title>An SGS3-like protein functions in RNA-directed DNA methylation and transcriptional gene silencing in Arabidopsis.</title>
        <authorList>
            <person name="Zheng Z."/>
            <person name="Xing Y."/>
            <person name="He X.J."/>
            <person name="Li W."/>
            <person name="Hu Y."/>
            <person name="Yadav S.K."/>
            <person name="Oh J."/>
            <person name="Zhu J.K."/>
        </authorList>
    </citation>
    <scope>FUNCTION</scope>
    <scope>DISRUPTION PHENOTYPE</scope>
</reference>
<reference key="6">
    <citation type="journal article" date="2012" name="Epigenetics">
        <title>IDN2 has a role downstream of siRNA formation in RNA-directed DNA methylation.</title>
        <authorList>
            <person name="Finke A."/>
            <person name="Kuhlmann M."/>
            <person name="Mette M.F."/>
        </authorList>
    </citation>
    <scope>FUNCTION</scope>
    <scope>DISRUPTION PHENOTYPE</scope>
</reference>
<reference key="7">
    <citation type="journal article" date="2012" name="PLoS Genet.">
        <title>IDN2 and its paralogs form a complex required for RNA-directed DNA methylation.</title>
        <authorList>
            <person name="Zhang C.J."/>
            <person name="Ning Y.Q."/>
            <person name="Zhang S.W."/>
            <person name="Chen Q."/>
            <person name="Shao C.R."/>
            <person name="Guo Y.W."/>
            <person name="Zhou J.X."/>
            <person name="Li L."/>
            <person name="Chen S."/>
            <person name="He X.J."/>
        </authorList>
    </citation>
    <scope>IDENTIFICATION BY MASS SPECTROMETRY</scope>
    <scope>FUNCTION</scope>
    <scope>SUBUNIT</scope>
    <scope>DISRUPTION PHENOTYPE</scope>
</reference>
<reference key="8">
    <citation type="journal article" date="2013" name="Mol. Cell">
        <title>A SWI/SNF chromatin-remodeling complex acts in noncoding RNA-mediated transcriptional silencing.</title>
        <authorList>
            <person name="Zhu Y."/>
            <person name="Rowley M.J."/>
            <person name="Bohmdorfer G."/>
            <person name="Wierzbicki A.T."/>
        </authorList>
    </citation>
    <scope>FUNCTION</scope>
    <scope>HOMODIMERIZATION</scope>
</reference>
<reference key="9">
    <citation type="journal article" date="2014" name="Plant J.">
        <title>RNA-directed DNA methylation requires stepwise binding of silencing factors to long non-coding RNA.</title>
        <authorList>
            <person name="Boehmdorfer G."/>
            <person name="Rowley M.J."/>
            <person name="Kucinski J."/>
            <person name="Zhu Y."/>
            <person name="Amies I."/>
            <person name="Wierzbicki A.T."/>
        </authorList>
    </citation>
    <scope>FUNCTION</scope>
</reference>
<reference key="10">
    <citation type="journal article" date="2012" name="Proc. Natl. Acad. Sci. U.S.A.">
        <title>INVOLVED IN DE NOVO 2-containing complex involved in RNA-directed DNA methylation in Arabidopsis.</title>
        <authorList>
            <person name="Ausin I."/>
            <person name="Greenberg M.V."/>
            <person name="Simanshu D.K."/>
            <person name="Hale C.J."/>
            <person name="Vashisht A.A."/>
            <person name="Simon S.A."/>
            <person name="Lee T.F."/>
            <person name="Feng S."/>
            <person name="Espanola S.D."/>
            <person name="Meyers B.C."/>
            <person name="Wohlschlegel J.A."/>
            <person name="Patel D.J."/>
            <person name="Jacobsen S.E."/>
        </authorList>
    </citation>
    <scope>X-RAY CRYSTALLOGRAPHY (2.70 ANGSTROMS) OF 120-290</scope>
    <scope>IDENTIFICATION BY MASS SPECTROMETRY</scope>
    <scope>FUNCTION</scope>
    <scope>SUBUNIT</scope>
    <scope>DISRUPTION PHENOTYPE</scope>
</reference>
<reference key="11">
    <citation type="journal article" date="2016" name="PLoS Genet.">
        <title>Two components of the RNA-Directed DNA methylation pathway associate with MORC6 and silence loci targeted by MORC6 in Arabidopsis.</title>
        <authorList>
            <person name="Liu Z.-W."/>
            <person name="Zhou J.-X."/>
            <person name="Huang H.-W."/>
            <person name="Li Y.-Q."/>
            <person name="Shao C.-R."/>
            <person name="Li L."/>
            <person name="Cai T."/>
            <person name="Chen S."/>
            <person name="He X.-J."/>
        </authorList>
    </citation>
    <scope>FUNCTION</scope>
    <scope>INTERACTION WITH MORC6</scope>
</reference>
<dbReference type="EMBL" id="AL133315">
    <property type="protein sequence ID" value="CAB62356.1"/>
    <property type="status" value="ALT_SEQ"/>
    <property type="molecule type" value="Genomic_DNA"/>
</dbReference>
<dbReference type="EMBL" id="CP002686">
    <property type="protein sequence ID" value="AEE78442.1"/>
    <property type="molecule type" value="Genomic_DNA"/>
</dbReference>
<dbReference type="EMBL" id="CP002686">
    <property type="protein sequence ID" value="AEE78443.1"/>
    <property type="molecule type" value="Genomic_DNA"/>
</dbReference>
<dbReference type="EMBL" id="CP002686">
    <property type="protein sequence ID" value="ANM65088.1"/>
    <property type="molecule type" value="Genomic_DNA"/>
</dbReference>
<dbReference type="EMBL" id="AY065184">
    <property type="protein sequence ID" value="AAL38360.1"/>
    <property type="molecule type" value="mRNA"/>
</dbReference>
<dbReference type="EMBL" id="BT000136">
    <property type="protein sequence ID" value="AAN15455.1"/>
    <property type="molecule type" value="mRNA"/>
</dbReference>
<dbReference type="PIR" id="T46211">
    <property type="entry name" value="T46211"/>
</dbReference>
<dbReference type="RefSeq" id="NP_001327083.1">
    <property type="nucleotide sequence ID" value="NM_001339377.1"/>
</dbReference>
<dbReference type="RefSeq" id="NP_190436.2">
    <property type="nucleotide sequence ID" value="NM_114726.6"/>
</dbReference>
<dbReference type="RefSeq" id="NP_974403.1">
    <property type="nucleotide sequence ID" value="NM_202674.3"/>
</dbReference>
<dbReference type="PDB" id="4E8U">
    <property type="method" value="X-ray"/>
    <property type="resolution" value="2.70 A"/>
    <property type="chains" value="A/C=120-290"/>
</dbReference>
<dbReference type="PDBsum" id="4E8U"/>
<dbReference type="SMR" id="Q8VZ79"/>
<dbReference type="BioGRID" id="9345">
    <property type="interactions" value="3"/>
</dbReference>
<dbReference type="FunCoup" id="Q8VZ79">
    <property type="interactions" value="624"/>
</dbReference>
<dbReference type="STRING" id="3702.Q8VZ79"/>
<dbReference type="PaxDb" id="3702-AT3G48670.1"/>
<dbReference type="ProteomicsDB" id="232181"/>
<dbReference type="EnsemblPlants" id="AT3G48670.1">
    <property type="protein sequence ID" value="AT3G48670.1"/>
    <property type="gene ID" value="AT3G48670"/>
</dbReference>
<dbReference type="EnsemblPlants" id="AT3G48670.2">
    <property type="protein sequence ID" value="AT3G48670.2"/>
    <property type="gene ID" value="AT3G48670"/>
</dbReference>
<dbReference type="EnsemblPlants" id="AT3G48670.3">
    <property type="protein sequence ID" value="AT3G48670.3"/>
    <property type="gene ID" value="AT3G48670"/>
</dbReference>
<dbReference type="GeneID" id="824027"/>
<dbReference type="Gramene" id="AT3G48670.1">
    <property type="protein sequence ID" value="AT3G48670.1"/>
    <property type="gene ID" value="AT3G48670"/>
</dbReference>
<dbReference type="Gramene" id="AT3G48670.2">
    <property type="protein sequence ID" value="AT3G48670.2"/>
    <property type="gene ID" value="AT3G48670"/>
</dbReference>
<dbReference type="Gramene" id="AT3G48670.3">
    <property type="protein sequence ID" value="AT3G48670.3"/>
    <property type="gene ID" value="AT3G48670"/>
</dbReference>
<dbReference type="KEGG" id="ath:AT3G48670"/>
<dbReference type="Araport" id="AT3G48670"/>
<dbReference type="TAIR" id="AT3G48670">
    <property type="gene designation" value="IDN2"/>
</dbReference>
<dbReference type="eggNOG" id="ENOG502QRE8">
    <property type="taxonomic scope" value="Eukaryota"/>
</dbReference>
<dbReference type="HOGENOM" id="CLU_021775_1_1_1"/>
<dbReference type="InParanoid" id="Q8VZ79"/>
<dbReference type="OMA" id="DCDHDEK"/>
<dbReference type="OrthoDB" id="1892195at2759"/>
<dbReference type="PhylomeDB" id="Q8VZ79"/>
<dbReference type="EvolutionaryTrace" id="Q8VZ79"/>
<dbReference type="PRO" id="PR:Q8VZ79"/>
<dbReference type="Proteomes" id="UP000006548">
    <property type="component" value="Chromosome 3"/>
</dbReference>
<dbReference type="ExpressionAtlas" id="Q8VZ79">
    <property type="expression patterns" value="baseline and differential"/>
</dbReference>
<dbReference type="GO" id="GO:0003723">
    <property type="term" value="F:RNA binding"/>
    <property type="evidence" value="ECO:0007669"/>
    <property type="project" value="UniProtKB-KW"/>
</dbReference>
<dbReference type="GO" id="GO:0080188">
    <property type="term" value="P:gene silencing by siRNA-directed DNA methylation"/>
    <property type="evidence" value="ECO:0007669"/>
    <property type="project" value="InterPro"/>
</dbReference>
<dbReference type="GO" id="GO:0010569">
    <property type="term" value="P:regulation of double-strand break repair via homologous recombination"/>
    <property type="evidence" value="ECO:0000270"/>
    <property type="project" value="TAIR"/>
</dbReference>
<dbReference type="GO" id="GO:0046686">
    <property type="term" value="P:response to cadmium ion"/>
    <property type="evidence" value="ECO:0000270"/>
    <property type="project" value="TAIR"/>
</dbReference>
<dbReference type="CDD" id="cd12266">
    <property type="entry name" value="RRM_like_XS"/>
    <property type="match status" value="1"/>
</dbReference>
<dbReference type="FunFam" id="3.30.70.2890:FF:000001">
    <property type="entry name" value="Factor of DNA methylation 2"/>
    <property type="match status" value="1"/>
</dbReference>
<dbReference type="Gene3D" id="3.30.70.2890">
    <property type="entry name" value="XS domain"/>
    <property type="match status" value="1"/>
</dbReference>
<dbReference type="InterPro" id="IPR045177">
    <property type="entry name" value="FDM1-5/IDN2"/>
</dbReference>
<dbReference type="InterPro" id="IPR005379">
    <property type="entry name" value="FDM1-5/IDN2_XH"/>
</dbReference>
<dbReference type="InterPro" id="IPR005380">
    <property type="entry name" value="XS_domain"/>
</dbReference>
<dbReference type="InterPro" id="IPR038588">
    <property type="entry name" value="XS_domain_sf"/>
</dbReference>
<dbReference type="InterPro" id="IPR005381">
    <property type="entry name" value="Znf-XS_domain"/>
</dbReference>
<dbReference type="PANTHER" id="PTHR21596:SF65">
    <property type="entry name" value="PROTEIN INVOLVED IN DE NOVO 2-RELATED"/>
    <property type="match status" value="1"/>
</dbReference>
<dbReference type="PANTHER" id="PTHR21596">
    <property type="entry name" value="RIBONUCLEASE P SUBUNIT P38"/>
    <property type="match status" value="1"/>
</dbReference>
<dbReference type="Pfam" id="PF03469">
    <property type="entry name" value="XH"/>
    <property type="match status" value="1"/>
</dbReference>
<dbReference type="Pfam" id="PF03468">
    <property type="entry name" value="XS"/>
    <property type="match status" value="1"/>
</dbReference>
<dbReference type="Pfam" id="PF03470">
    <property type="entry name" value="zf-XS"/>
    <property type="match status" value="1"/>
</dbReference>
<protein>
    <recommendedName>
        <fullName evidence="11">Protein INVOLVED IN DE NOVO 2</fullName>
    </recommendedName>
    <alternativeName>
        <fullName evidence="12">Protein RNA-DIRECTED DNA METHYLATION 12</fullName>
    </alternativeName>
</protein>
<gene>
    <name evidence="11" type="primary">IDN2</name>
    <name evidence="12" type="synonym">RDM12</name>
    <name evidence="13" type="ordered locus">At3g48670</name>
    <name evidence="15" type="ORF">T8P19.180</name>
</gene>
<organism evidence="14">
    <name type="scientific">Arabidopsis thaliana</name>
    <name type="common">Mouse-ear cress</name>
    <dbReference type="NCBI Taxonomy" id="3702"/>
    <lineage>
        <taxon>Eukaryota</taxon>
        <taxon>Viridiplantae</taxon>
        <taxon>Streptophyta</taxon>
        <taxon>Embryophyta</taxon>
        <taxon>Tracheophyta</taxon>
        <taxon>Spermatophyta</taxon>
        <taxon>Magnoliopsida</taxon>
        <taxon>eudicotyledons</taxon>
        <taxon>Gunneridae</taxon>
        <taxon>Pentapetalae</taxon>
        <taxon>rosids</taxon>
        <taxon>malvids</taxon>
        <taxon>Brassicales</taxon>
        <taxon>Brassicaceae</taxon>
        <taxon>Camelineae</taxon>
        <taxon>Arabidopsis</taxon>
    </lineage>
</organism>
<evidence type="ECO:0000255" key="1"/>
<evidence type="ECO:0000256" key="2">
    <source>
        <dbReference type="SAM" id="MobiDB-lite"/>
    </source>
</evidence>
<evidence type="ECO:0000269" key="3">
    <source>
    </source>
</evidence>
<evidence type="ECO:0000269" key="4">
    <source>
    </source>
</evidence>
<evidence type="ECO:0000269" key="5">
    <source>
    </source>
</evidence>
<evidence type="ECO:0000269" key="6">
    <source>
    </source>
</evidence>
<evidence type="ECO:0000269" key="7">
    <source>
    </source>
</evidence>
<evidence type="ECO:0000269" key="8">
    <source>
    </source>
</evidence>
<evidence type="ECO:0000269" key="9">
    <source>
    </source>
</evidence>
<evidence type="ECO:0000269" key="10">
    <source>
    </source>
</evidence>
<evidence type="ECO:0000303" key="11">
    <source>
    </source>
</evidence>
<evidence type="ECO:0000303" key="12">
    <source>
    </source>
</evidence>
<evidence type="ECO:0000312" key="13">
    <source>
        <dbReference type="Araport" id="AT3G48670"/>
    </source>
</evidence>
<evidence type="ECO:0000312" key="14">
    <source>
        <dbReference type="EMBL" id="AAL38360.1"/>
    </source>
</evidence>
<evidence type="ECO:0000312" key="15">
    <source>
        <dbReference type="EMBL" id="CAB62356.1"/>
    </source>
</evidence>
<evidence type="ECO:0007829" key="16">
    <source>
        <dbReference type="PDB" id="4E8U"/>
    </source>
</evidence>
<keyword id="KW-0002">3D-structure</keyword>
<keyword id="KW-0175">Coiled coil</keyword>
<keyword id="KW-1185">Reference proteome</keyword>
<keyword id="KW-0694">RNA-binding</keyword>
<keyword id="KW-0943">RNA-mediated gene silencing</keyword>
<feature type="chain" id="PRO_0000430686" description="Protein INVOLVED IN DE NOVO 2">
    <location>
        <begin position="1"/>
        <end position="647"/>
    </location>
</feature>
<feature type="region of interest" description="Disordered" evidence="2">
    <location>
        <begin position="1"/>
        <end position="20"/>
    </location>
</feature>
<feature type="region of interest" description="Disordered" evidence="2">
    <location>
        <begin position="101"/>
        <end position="123"/>
    </location>
</feature>
<feature type="coiled-coil region" evidence="1">
    <location>
        <begin position="253"/>
        <end position="508"/>
    </location>
</feature>
<feature type="compositionally biased region" description="Acidic residues" evidence="2">
    <location>
        <begin position="9"/>
        <end position="20"/>
    </location>
</feature>
<feature type="mutagenesis site" description="Loss of RNA binding.">
    <original>N</original>
    <variation>A</variation>
    <location>
        <position position="116"/>
    </location>
</feature>
<feature type="mutagenesis site" description="Loss of RNA binding.">
    <original>F</original>
    <variation>A</variation>
    <location>
        <position position="165"/>
    </location>
</feature>
<feature type="strand" evidence="16">
    <location>
        <begin position="126"/>
        <end position="130"/>
    </location>
</feature>
<feature type="strand" evidence="16">
    <location>
        <begin position="132"/>
        <end position="136"/>
    </location>
</feature>
<feature type="helix" evidence="16">
    <location>
        <begin position="154"/>
        <end position="162"/>
    </location>
</feature>
<feature type="strand" evidence="16">
    <location>
        <begin position="168"/>
        <end position="174"/>
    </location>
</feature>
<feature type="strand" evidence="16">
    <location>
        <begin position="176"/>
        <end position="186"/>
    </location>
</feature>
<feature type="helix" evidence="16">
    <location>
        <begin position="191"/>
        <end position="206"/>
    </location>
</feature>
<feature type="helix" evidence="16">
    <location>
        <begin position="211"/>
        <end position="214"/>
    </location>
</feature>
<feature type="strand" evidence="16">
    <location>
        <begin position="217"/>
        <end position="219"/>
    </location>
</feature>
<feature type="strand" evidence="16">
    <location>
        <begin position="225"/>
        <end position="228"/>
    </location>
</feature>
<feature type="helix" evidence="16">
    <location>
        <begin position="231"/>
        <end position="235"/>
    </location>
</feature>
<feature type="strand" evidence="16">
    <location>
        <begin position="236"/>
        <end position="238"/>
    </location>
</feature>
<feature type="helix" evidence="16">
    <location>
        <begin position="239"/>
        <end position="245"/>
    </location>
</feature>
<feature type="strand" evidence="16">
    <location>
        <begin position="249"/>
        <end position="252"/>
    </location>
</feature>
<feature type="helix" evidence="16">
    <location>
        <begin position="253"/>
        <end position="288"/>
    </location>
</feature>
<accession>Q8VZ79</accession>
<accession>Q9SMN2</accession>